<feature type="chain" id="PRO_1000099015" description="NH(3)-dependent NAD(+) synthetase">
    <location>
        <begin position="1"/>
        <end position="277"/>
    </location>
</feature>
<feature type="binding site" evidence="1">
    <location>
        <begin position="36"/>
        <end position="43"/>
    </location>
    <ligand>
        <name>ATP</name>
        <dbReference type="ChEBI" id="CHEBI:30616"/>
    </ligand>
</feature>
<feature type="binding site" evidence="1">
    <location>
        <position position="42"/>
    </location>
    <ligand>
        <name>Mg(2+)</name>
        <dbReference type="ChEBI" id="CHEBI:18420"/>
    </ligand>
</feature>
<feature type="binding site" evidence="1">
    <location>
        <position position="118"/>
    </location>
    <ligand>
        <name>deamido-NAD(+)</name>
        <dbReference type="ChEBI" id="CHEBI:58437"/>
    </ligand>
</feature>
<feature type="binding site" evidence="1">
    <location>
        <position position="138"/>
    </location>
    <ligand>
        <name>ATP</name>
        <dbReference type="ChEBI" id="CHEBI:30616"/>
    </ligand>
</feature>
<feature type="binding site" evidence="1">
    <location>
        <position position="143"/>
    </location>
    <ligand>
        <name>Mg(2+)</name>
        <dbReference type="ChEBI" id="CHEBI:18420"/>
    </ligand>
</feature>
<feature type="binding site" evidence="1">
    <location>
        <position position="167"/>
    </location>
    <ligand>
        <name>ATP</name>
        <dbReference type="ChEBI" id="CHEBI:30616"/>
    </ligand>
</feature>
<feature type="binding site" evidence="1">
    <location>
        <position position="189"/>
    </location>
    <ligand>
        <name>ATP</name>
        <dbReference type="ChEBI" id="CHEBI:30616"/>
    </ligand>
</feature>
<reference key="1">
    <citation type="submission" date="2008-06" db="EMBL/GenBank/DDBJ databases">
        <title>Complete sequence of Chlorobaculum parvum NCIB 8327.</title>
        <authorList>
            <consortium name="US DOE Joint Genome Institute"/>
            <person name="Lucas S."/>
            <person name="Copeland A."/>
            <person name="Lapidus A."/>
            <person name="Glavina del Rio T."/>
            <person name="Dalin E."/>
            <person name="Tice H."/>
            <person name="Bruce D."/>
            <person name="Goodwin L."/>
            <person name="Pitluck S."/>
            <person name="Schmutz J."/>
            <person name="Larimer F."/>
            <person name="Land M."/>
            <person name="Hauser L."/>
            <person name="Kyrpides N."/>
            <person name="Mikhailova N."/>
            <person name="Zhao F."/>
            <person name="Li T."/>
            <person name="Liu Z."/>
            <person name="Overmann J."/>
            <person name="Bryant D.A."/>
            <person name="Richardson P."/>
        </authorList>
    </citation>
    <scope>NUCLEOTIDE SEQUENCE [LARGE SCALE GENOMIC DNA]</scope>
    <source>
        <strain>DSM 263 / NCIMB 8327</strain>
    </source>
</reference>
<organism>
    <name type="scientific">Chlorobaculum parvum (strain DSM 263 / NCIMB 8327)</name>
    <name type="common">Chlorobium vibrioforme subsp. thiosulfatophilum</name>
    <dbReference type="NCBI Taxonomy" id="517417"/>
    <lineage>
        <taxon>Bacteria</taxon>
        <taxon>Pseudomonadati</taxon>
        <taxon>Chlorobiota</taxon>
        <taxon>Chlorobiia</taxon>
        <taxon>Chlorobiales</taxon>
        <taxon>Chlorobiaceae</taxon>
        <taxon>Chlorobaculum</taxon>
    </lineage>
</organism>
<evidence type="ECO:0000255" key="1">
    <source>
        <dbReference type="HAMAP-Rule" id="MF_00193"/>
    </source>
</evidence>
<protein>
    <recommendedName>
        <fullName evidence="1">NH(3)-dependent NAD(+) synthetase</fullName>
        <ecNumber evidence="1">6.3.1.5</ecNumber>
    </recommendedName>
</protein>
<comment type="function">
    <text evidence="1">Catalyzes the ATP-dependent amidation of deamido-NAD to form NAD. Uses ammonia as a nitrogen source.</text>
</comment>
<comment type="catalytic activity">
    <reaction evidence="1">
        <text>deamido-NAD(+) + NH4(+) + ATP = AMP + diphosphate + NAD(+) + H(+)</text>
        <dbReference type="Rhea" id="RHEA:21188"/>
        <dbReference type="ChEBI" id="CHEBI:15378"/>
        <dbReference type="ChEBI" id="CHEBI:28938"/>
        <dbReference type="ChEBI" id="CHEBI:30616"/>
        <dbReference type="ChEBI" id="CHEBI:33019"/>
        <dbReference type="ChEBI" id="CHEBI:57540"/>
        <dbReference type="ChEBI" id="CHEBI:58437"/>
        <dbReference type="ChEBI" id="CHEBI:456215"/>
        <dbReference type="EC" id="6.3.1.5"/>
    </reaction>
</comment>
<comment type="pathway">
    <text evidence="1">Cofactor biosynthesis; NAD(+) biosynthesis; NAD(+) from deamido-NAD(+) (ammonia route): step 1/1.</text>
</comment>
<comment type="subunit">
    <text evidence="1">Homodimer.</text>
</comment>
<comment type="similarity">
    <text evidence="1">Belongs to the NAD synthetase family.</text>
</comment>
<gene>
    <name evidence="1" type="primary">nadE</name>
    <name type="ordered locus">Cpar_0584</name>
</gene>
<dbReference type="EC" id="6.3.1.5" evidence="1"/>
<dbReference type="EMBL" id="CP001099">
    <property type="protein sequence ID" value="ACF11004.1"/>
    <property type="molecule type" value="Genomic_DNA"/>
</dbReference>
<dbReference type="RefSeq" id="WP_012501837.1">
    <property type="nucleotide sequence ID" value="NC_011027.1"/>
</dbReference>
<dbReference type="SMR" id="B3QM51"/>
<dbReference type="STRING" id="517417.Cpar_0584"/>
<dbReference type="KEGG" id="cpc:Cpar_0584"/>
<dbReference type="eggNOG" id="COG0171">
    <property type="taxonomic scope" value="Bacteria"/>
</dbReference>
<dbReference type="HOGENOM" id="CLU_059327_1_2_10"/>
<dbReference type="OrthoDB" id="9803818at2"/>
<dbReference type="UniPathway" id="UPA00253">
    <property type="reaction ID" value="UER00333"/>
</dbReference>
<dbReference type="Proteomes" id="UP000008811">
    <property type="component" value="Chromosome"/>
</dbReference>
<dbReference type="GO" id="GO:0005737">
    <property type="term" value="C:cytoplasm"/>
    <property type="evidence" value="ECO:0007669"/>
    <property type="project" value="InterPro"/>
</dbReference>
<dbReference type="GO" id="GO:0005524">
    <property type="term" value="F:ATP binding"/>
    <property type="evidence" value="ECO:0007669"/>
    <property type="project" value="UniProtKB-UniRule"/>
</dbReference>
<dbReference type="GO" id="GO:0004359">
    <property type="term" value="F:glutaminase activity"/>
    <property type="evidence" value="ECO:0007669"/>
    <property type="project" value="InterPro"/>
</dbReference>
<dbReference type="GO" id="GO:0046872">
    <property type="term" value="F:metal ion binding"/>
    <property type="evidence" value="ECO:0007669"/>
    <property type="project" value="UniProtKB-KW"/>
</dbReference>
<dbReference type="GO" id="GO:0003952">
    <property type="term" value="F:NAD+ synthase (glutamine-hydrolyzing) activity"/>
    <property type="evidence" value="ECO:0007669"/>
    <property type="project" value="InterPro"/>
</dbReference>
<dbReference type="GO" id="GO:0008795">
    <property type="term" value="F:NAD+ synthase activity"/>
    <property type="evidence" value="ECO:0007669"/>
    <property type="project" value="UniProtKB-UniRule"/>
</dbReference>
<dbReference type="GO" id="GO:0009435">
    <property type="term" value="P:NAD biosynthetic process"/>
    <property type="evidence" value="ECO:0007669"/>
    <property type="project" value="UniProtKB-UniRule"/>
</dbReference>
<dbReference type="CDD" id="cd00553">
    <property type="entry name" value="NAD_synthase"/>
    <property type="match status" value="1"/>
</dbReference>
<dbReference type="FunFam" id="3.40.50.620:FF:000106">
    <property type="entry name" value="Glutamine-dependent NAD(+) synthetase"/>
    <property type="match status" value="1"/>
</dbReference>
<dbReference type="Gene3D" id="3.40.50.620">
    <property type="entry name" value="HUPs"/>
    <property type="match status" value="1"/>
</dbReference>
<dbReference type="HAMAP" id="MF_00193">
    <property type="entry name" value="NadE_ammonia_dep"/>
    <property type="match status" value="1"/>
</dbReference>
<dbReference type="InterPro" id="IPR022310">
    <property type="entry name" value="NAD/GMP_synthase"/>
</dbReference>
<dbReference type="InterPro" id="IPR003694">
    <property type="entry name" value="NAD_synthase"/>
</dbReference>
<dbReference type="InterPro" id="IPR022926">
    <property type="entry name" value="NH(3)-dep_NAD(+)_synth"/>
</dbReference>
<dbReference type="InterPro" id="IPR014729">
    <property type="entry name" value="Rossmann-like_a/b/a_fold"/>
</dbReference>
<dbReference type="NCBIfam" id="TIGR00552">
    <property type="entry name" value="nadE"/>
    <property type="match status" value="1"/>
</dbReference>
<dbReference type="NCBIfam" id="NF010587">
    <property type="entry name" value="PRK13980.1"/>
    <property type="match status" value="1"/>
</dbReference>
<dbReference type="PANTHER" id="PTHR23090:SF9">
    <property type="entry name" value="GLUTAMINE-DEPENDENT NAD(+) SYNTHETASE"/>
    <property type="match status" value="1"/>
</dbReference>
<dbReference type="PANTHER" id="PTHR23090">
    <property type="entry name" value="NH 3 /GLUTAMINE-DEPENDENT NAD + SYNTHETASE"/>
    <property type="match status" value="1"/>
</dbReference>
<dbReference type="Pfam" id="PF02540">
    <property type="entry name" value="NAD_synthase"/>
    <property type="match status" value="1"/>
</dbReference>
<dbReference type="SUPFAM" id="SSF52402">
    <property type="entry name" value="Adenine nucleotide alpha hydrolases-like"/>
    <property type="match status" value="1"/>
</dbReference>
<name>NADE_CHLP8</name>
<sequence length="277" mass="31189">MEPQDLHLDYGLVESILIPFIRNEIRKFGFRSVVLGLSGGIDSAVVCELAARSLGADNVLALLMPYKTSSRESLEHAQLMVDRLGIRAETMPVTGVVDAFFETRPDASRLRRGNVMARSRMLCLYDVSARDGCLVLGTSNKTELMLGYGTMFGDMASAVNPIGDLYKTQLWGLARHLGVPSELIDKQPSADLWEGQSDEADLGFSYEEVDQLLYMMLEERMERDAILAEGIAPAFYDRVRQMVVRNQYKRMMPVIAKLSSRTPGIDFRYARDWQEMK</sequence>
<proteinExistence type="inferred from homology"/>
<keyword id="KW-0067">ATP-binding</keyword>
<keyword id="KW-0436">Ligase</keyword>
<keyword id="KW-0460">Magnesium</keyword>
<keyword id="KW-0479">Metal-binding</keyword>
<keyword id="KW-0520">NAD</keyword>
<keyword id="KW-0547">Nucleotide-binding</keyword>
<accession>B3QM51</accession>